<reference key="1">
    <citation type="journal article" date="1995" name="Science">
        <title>Whole-genome random sequencing and assembly of Haemophilus influenzae Rd.</title>
        <authorList>
            <person name="Fleischmann R.D."/>
            <person name="Adams M.D."/>
            <person name="White O."/>
            <person name="Clayton R.A."/>
            <person name="Kirkness E.F."/>
            <person name="Kerlavage A.R."/>
            <person name="Bult C.J."/>
            <person name="Tomb J.-F."/>
            <person name="Dougherty B.A."/>
            <person name="Merrick J.M."/>
            <person name="McKenney K."/>
            <person name="Sutton G.G."/>
            <person name="FitzHugh W."/>
            <person name="Fields C.A."/>
            <person name="Gocayne J.D."/>
            <person name="Scott J.D."/>
            <person name="Shirley R."/>
            <person name="Liu L.-I."/>
            <person name="Glodek A."/>
            <person name="Kelley J.M."/>
            <person name="Weidman J.F."/>
            <person name="Phillips C.A."/>
            <person name="Spriggs T."/>
            <person name="Hedblom E."/>
            <person name="Cotton M.D."/>
            <person name="Utterback T.R."/>
            <person name="Hanna M.C."/>
            <person name="Nguyen D.T."/>
            <person name="Saudek D.M."/>
            <person name="Brandon R.C."/>
            <person name="Fine L.D."/>
            <person name="Fritchman J.L."/>
            <person name="Fuhrmann J.L."/>
            <person name="Geoghagen N.S.M."/>
            <person name="Gnehm C.L."/>
            <person name="McDonald L.A."/>
            <person name="Small K.V."/>
            <person name="Fraser C.M."/>
            <person name="Smith H.O."/>
            <person name="Venter J.C."/>
        </authorList>
    </citation>
    <scope>NUCLEOTIDE SEQUENCE [LARGE SCALE GENOMIC DNA]</scope>
    <source>
        <strain>ATCC 51907 / DSM 11121 / KW20 / Rd</strain>
    </source>
</reference>
<protein>
    <recommendedName>
        <fullName>Uncharacterized protein HI_0577</fullName>
    </recommendedName>
</protein>
<dbReference type="EMBL" id="L42023">
    <property type="protein sequence ID" value="AAC22241.1"/>
    <property type="molecule type" value="Genomic_DNA"/>
</dbReference>
<dbReference type="PIR" id="H64009">
    <property type="entry name" value="H64009"/>
</dbReference>
<dbReference type="RefSeq" id="NP_438735.1">
    <property type="nucleotide sequence ID" value="NC_000907.1"/>
</dbReference>
<dbReference type="SMR" id="P44017"/>
<dbReference type="STRING" id="71421.HI_0577"/>
<dbReference type="EnsemblBacteria" id="AAC22241">
    <property type="protein sequence ID" value="AAC22241"/>
    <property type="gene ID" value="HI_0577"/>
</dbReference>
<dbReference type="KEGG" id="hin:HI_0577"/>
<dbReference type="PATRIC" id="fig|71421.8.peg.598"/>
<dbReference type="eggNOG" id="COG2168">
    <property type="taxonomic scope" value="Bacteria"/>
</dbReference>
<dbReference type="HOGENOM" id="CLU_166087_2_0_6"/>
<dbReference type="OrthoDB" id="7064722at2"/>
<dbReference type="BioCyc" id="HINF71421:G1GJ1-590-MONOMER"/>
<dbReference type="Proteomes" id="UP000000579">
    <property type="component" value="Chromosome"/>
</dbReference>
<dbReference type="GO" id="GO:0005737">
    <property type="term" value="C:cytoplasm"/>
    <property type="evidence" value="ECO:0007669"/>
    <property type="project" value="InterPro"/>
</dbReference>
<dbReference type="GO" id="GO:0002143">
    <property type="term" value="P:tRNA wobble position uridine thiolation"/>
    <property type="evidence" value="ECO:0007669"/>
    <property type="project" value="InterPro"/>
</dbReference>
<dbReference type="Gene3D" id="3.40.1260.10">
    <property type="entry name" value="DsrEFH-like"/>
    <property type="match status" value="1"/>
</dbReference>
<dbReference type="InterPro" id="IPR027396">
    <property type="entry name" value="DsrEFH-like"/>
</dbReference>
<dbReference type="InterPro" id="IPR007215">
    <property type="entry name" value="Sulphur_relay_TusB/DsrH"/>
</dbReference>
<dbReference type="Pfam" id="PF04077">
    <property type="entry name" value="DsrH"/>
    <property type="match status" value="1"/>
</dbReference>
<dbReference type="SUPFAM" id="SSF75169">
    <property type="entry name" value="DsrEFH-like"/>
    <property type="match status" value="1"/>
</dbReference>
<accession>P44017</accession>
<keyword id="KW-1185">Reference proteome</keyword>
<proteinExistence type="predicted"/>
<gene>
    <name type="ordered locus">HI_0577</name>
</gene>
<sequence>MLYTFSQSDYPKTELDDYFSYITEKDAVVLWQDGVLLAIKYPDYFAKCKGNCMILKQDILARNLTALLPQSSKIKLISIEELVGITENYLPQLSL</sequence>
<feature type="chain" id="PRO_0000077935" description="Uncharacterized protein HI_0577">
    <location>
        <begin position="1"/>
        <end position="95"/>
    </location>
</feature>
<organism>
    <name type="scientific">Haemophilus influenzae (strain ATCC 51907 / DSM 11121 / KW20 / Rd)</name>
    <dbReference type="NCBI Taxonomy" id="71421"/>
    <lineage>
        <taxon>Bacteria</taxon>
        <taxon>Pseudomonadati</taxon>
        <taxon>Pseudomonadota</taxon>
        <taxon>Gammaproteobacteria</taxon>
        <taxon>Pasteurellales</taxon>
        <taxon>Pasteurellaceae</taxon>
        <taxon>Haemophilus</taxon>
    </lineage>
</organism>
<name>Y577_HAEIN</name>